<name>MUG_ECO24</name>
<comment type="function">
    <text evidence="1">Excises ethenocytosine and uracil, which can arise by alkylation or deamination of cytosine, respectively, from the corresponding mispairs with guanine in ds-DNA. It is capable of hydrolyzing the carbon-nitrogen bond between the sugar-phosphate backbone of the DNA and the mispaired base. The complementary strand guanine functions in substrate recognition. Required for DNA damage lesion repair in stationary-phase cells.</text>
</comment>
<comment type="catalytic activity">
    <reaction evidence="1">
        <text>Specifically hydrolyzes mismatched double-stranded DNA and polynucleotides, releasing free uracil.</text>
        <dbReference type="EC" id="3.2.2.28"/>
    </reaction>
</comment>
<comment type="subunit">
    <text evidence="1">Binds DNA as a monomer.</text>
</comment>
<comment type="subcellular location">
    <subcellularLocation>
        <location evidence="1">Cytoplasm</location>
    </subcellularLocation>
</comment>
<comment type="similarity">
    <text evidence="1">Belongs to the uracil-DNA glycosylase (UDG) superfamily. TDG/mug family.</text>
</comment>
<organism>
    <name type="scientific">Escherichia coli O139:H28 (strain E24377A / ETEC)</name>
    <dbReference type="NCBI Taxonomy" id="331111"/>
    <lineage>
        <taxon>Bacteria</taxon>
        <taxon>Pseudomonadati</taxon>
        <taxon>Pseudomonadota</taxon>
        <taxon>Gammaproteobacteria</taxon>
        <taxon>Enterobacterales</taxon>
        <taxon>Enterobacteriaceae</taxon>
        <taxon>Escherichia</taxon>
    </lineage>
</organism>
<protein>
    <recommendedName>
        <fullName evidence="1">G/U mismatch-specific DNA glycosylase</fullName>
        <ecNumber evidence="1">3.2.2.28</ecNumber>
    </recommendedName>
    <alternativeName>
        <fullName evidence="1">Double-strand-specific uracil glycosylase</fullName>
    </alternativeName>
    <alternativeName>
        <fullName evidence="1">Mismatch-specific uracil DNA-glycosylase</fullName>
        <shortName evidence="1">MUG</shortName>
    </alternativeName>
</protein>
<sequence>MVEDILAPGLRVVFCGINPGLSSAGTGFPFAHPANRFWKVIYQAGFTDRQLKPQEAQHLLDYRCGVTKLVDRPTVQANEVSKQELHAGGRKLIEKIEDYQPQALAILGKRAYEQGFSQRGAQWGKQTLTIGSTQIWVLPNPSGLSRVSLEKLVEAYRELDQALVVRGR</sequence>
<keyword id="KW-0963">Cytoplasm</keyword>
<keyword id="KW-0227">DNA damage</keyword>
<keyword id="KW-0228">DNA excision</keyword>
<keyword id="KW-0234">DNA repair</keyword>
<keyword id="KW-0238">DNA-binding</keyword>
<keyword id="KW-0378">Hydrolase</keyword>
<keyword id="KW-1185">Reference proteome</keyword>
<dbReference type="EC" id="3.2.2.28" evidence="1"/>
<dbReference type="EMBL" id="CP000800">
    <property type="protein sequence ID" value="ABV20535.1"/>
    <property type="molecule type" value="Genomic_DNA"/>
</dbReference>
<dbReference type="RefSeq" id="WP_000228940.1">
    <property type="nucleotide sequence ID" value="NC_009801.1"/>
</dbReference>
<dbReference type="SMR" id="A7ZRV0"/>
<dbReference type="KEGG" id="ecw:EcE24377A_3533"/>
<dbReference type="HOGENOM" id="CLU_042829_3_1_6"/>
<dbReference type="Proteomes" id="UP000001122">
    <property type="component" value="Chromosome"/>
</dbReference>
<dbReference type="GO" id="GO:0005737">
    <property type="term" value="C:cytoplasm"/>
    <property type="evidence" value="ECO:0007669"/>
    <property type="project" value="UniProtKB-SubCell"/>
</dbReference>
<dbReference type="GO" id="GO:0003677">
    <property type="term" value="F:DNA binding"/>
    <property type="evidence" value="ECO:0007669"/>
    <property type="project" value="UniProtKB-KW"/>
</dbReference>
<dbReference type="GO" id="GO:0008263">
    <property type="term" value="F:pyrimidine-specific mismatch base pair DNA N-glycosylase activity"/>
    <property type="evidence" value="ECO:0007669"/>
    <property type="project" value="UniProtKB-UniRule"/>
</dbReference>
<dbReference type="GO" id="GO:0004844">
    <property type="term" value="F:uracil DNA N-glycosylase activity"/>
    <property type="evidence" value="ECO:0007669"/>
    <property type="project" value="TreeGrafter"/>
</dbReference>
<dbReference type="GO" id="GO:0006285">
    <property type="term" value="P:base-excision repair, AP site formation"/>
    <property type="evidence" value="ECO:0007669"/>
    <property type="project" value="UniProtKB-UniRule"/>
</dbReference>
<dbReference type="CDD" id="cd10028">
    <property type="entry name" value="UDG-F2_TDG_MUG"/>
    <property type="match status" value="1"/>
</dbReference>
<dbReference type="FunFam" id="3.40.470.10:FF:000003">
    <property type="entry name" value="G/U mismatch-specific DNA glycosylase"/>
    <property type="match status" value="1"/>
</dbReference>
<dbReference type="Gene3D" id="3.40.470.10">
    <property type="entry name" value="Uracil-DNA glycosylase-like domain"/>
    <property type="match status" value="1"/>
</dbReference>
<dbReference type="HAMAP" id="MF_01956">
    <property type="entry name" value="MUG"/>
    <property type="match status" value="1"/>
</dbReference>
<dbReference type="InterPro" id="IPR015637">
    <property type="entry name" value="MUG/TDG"/>
</dbReference>
<dbReference type="InterPro" id="IPR023502">
    <property type="entry name" value="MUG_bact"/>
</dbReference>
<dbReference type="InterPro" id="IPR005122">
    <property type="entry name" value="Uracil-DNA_glycosylase-like"/>
</dbReference>
<dbReference type="InterPro" id="IPR036895">
    <property type="entry name" value="Uracil-DNA_glycosylase-like_sf"/>
</dbReference>
<dbReference type="NCBIfam" id="NF007570">
    <property type="entry name" value="PRK10201.1"/>
    <property type="match status" value="1"/>
</dbReference>
<dbReference type="PANTHER" id="PTHR12159">
    <property type="entry name" value="G/T AND G/U MISMATCH-SPECIFIC DNA GLYCOSYLASE"/>
    <property type="match status" value="1"/>
</dbReference>
<dbReference type="PANTHER" id="PTHR12159:SF9">
    <property type="entry name" value="G_T MISMATCH-SPECIFIC THYMINE DNA GLYCOSYLASE"/>
    <property type="match status" value="1"/>
</dbReference>
<dbReference type="Pfam" id="PF03167">
    <property type="entry name" value="UDG"/>
    <property type="match status" value="1"/>
</dbReference>
<dbReference type="SUPFAM" id="SSF52141">
    <property type="entry name" value="Uracil-DNA glycosylase-like"/>
    <property type="match status" value="1"/>
</dbReference>
<proteinExistence type="inferred from homology"/>
<evidence type="ECO:0000255" key="1">
    <source>
        <dbReference type="HAMAP-Rule" id="MF_01956"/>
    </source>
</evidence>
<feature type="chain" id="PRO_1000070787" description="G/U mismatch-specific DNA glycosylase">
    <location>
        <begin position="1"/>
        <end position="168"/>
    </location>
</feature>
<gene>
    <name evidence="1" type="primary">mug</name>
    <name type="ordered locus">EcE24377A_3533</name>
</gene>
<accession>A7ZRV0</accession>
<reference key="1">
    <citation type="journal article" date="2008" name="J. Bacteriol.">
        <title>The pangenome structure of Escherichia coli: comparative genomic analysis of E. coli commensal and pathogenic isolates.</title>
        <authorList>
            <person name="Rasko D.A."/>
            <person name="Rosovitz M.J."/>
            <person name="Myers G.S.A."/>
            <person name="Mongodin E.F."/>
            <person name="Fricke W.F."/>
            <person name="Gajer P."/>
            <person name="Crabtree J."/>
            <person name="Sebaihia M."/>
            <person name="Thomson N.R."/>
            <person name="Chaudhuri R."/>
            <person name="Henderson I.R."/>
            <person name="Sperandio V."/>
            <person name="Ravel J."/>
        </authorList>
    </citation>
    <scope>NUCLEOTIDE SEQUENCE [LARGE SCALE GENOMIC DNA]</scope>
    <source>
        <strain>E24377A / ETEC</strain>
    </source>
</reference>